<proteinExistence type="inferred from homology"/>
<organism>
    <name type="scientific">Pseudomonas fluorescens (strain Pf0-1)</name>
    <dbReference type="NCBI Taxonomy" id="205922"/>
    <lineage>
        <taxon>Bacteria</taxon>
        <taxon>Pseudomonadati</taxon>
        <taxon>Pseudomonadota</taxon>
        <taxon>Gammaproteobacteria</taxon>
        <taxon>Pseudomonadales</taxon>
        <taxon>Pseudomonadaceae</taxon>
        <taxon>Pseudomonas</taxon>
    </lineage>
</organism>
<sequence>MVNTPLAHDLLWGMTPAQLPADAPQWAIDSLAAGQPVVVRRALSEDGCVAVGVRGRFREQRLAAFMSVDSIACRVSPEALCQVESARDLPVMQALRQLRPVLDDCGWTWGVSGSVGFELASGFTAMHERSDLDLILRTPQLITRNQARKLVAYFEQAICRVDLQLQTPFGAVALREWAGNASRVLLKNAREACLVSDPWNPQEQAA</sequence>
<dbReference type="EC" id="2.7.7.66" evidence="1"/>
<dbReference type="EMBL" id="CP000094">
    <property type="protein sequence ID" value="ABA77034.1"/>
    <property type="molecule type" value="Genomic_DNA"/>
</dbReference>
<dbReference type="RefSeq" id="WP_011336355.1">
    <property type="nucleotide sequence ID" value="NC_007492.2"/>
</dbReference>
<dbReference type="KEGG" id="pfo:Pfl01_5297"/>
<dbReference type="eggNOG" id="ENOG502Z8NU">
    <property type="taxonomic scope" value="Bacteria"/>
</dbReference>
<dbReference type="HOGENOM" id="CLU_111981_0_0_6"/>
<dbReference type="Proteomes" id="UP000002704">
    <property type="component" value="Chromosome"/>
</dbReference>
<dbReference type="GO" id="GO:0016779">
    <property type="term" value="F:nucleotidyltransferase activity"/>
    <property type="evidence" value="ECO:0007669"/>
    <property type="project" value="UniProtKB-UniRule"/>
</dbReference>
<dbReference type="HAMAP" id="MF_00650">
    <property type="entry name" value="Malonate_MdcG"/>
    <property type="match status" value="1"/>
</dbReference>
<dbReference type="InterPro" id="IPR017557">
    <property type="entry name" value="Holo-ACP_synthase"/>
</dbReference>
<dbReference type="InterPro" id="IPR049180">
    <property type="entry name" value="MdcG_C"/>
</dbReference>
<dbReference type="InterPro" id="IPR048903">
    <property type="entry name" value="MdcG_N"/>
</dbReference>
<dbReference type="NCBIfam" id="TIGR03135">
    <property type="entry name" value="malonate_mdcG"/>
    <property type="match status" value="1"/>
</dbReference>
<dbReference type="NCBIfam" id="NF002332">
    <property type="entry name" value="PRK01293.1"/>
    <property type="match status" value="1"/>
</dbReference>
<dbReference type="Pfam" id="PF10620">
    <property type="entry name" value="MdcG"/>
    <property type="match status" value="1"/>
</dbReference>
<dbReference type="Pfam" id="PF20866">
    <property type="entry name" value="MdcG_N"/>
    <property type="match status" value="1"/>
</dbReference>
<keyword id="KW-0548">Nucleotidyltransferase</keyword>
<keyword id="KW-0808">Transferase</keyword>
<reference key="1">
    <citation type="journal article" date="2009" name="Genome Biol.">
        <title>Genomic and genetic analyses of diversity and plant interactions of Pseudomonas fluorescens.</title>
        <authorList>
            <person name="Silby M.W."/>
            <person name="Cerdeno-Tarraga A.M."/>
            <person name="Vernikos G.S."/>
            <person name="Giddens S.R."/>
            <person name="Jackson R.W."/>
            <person name="Preston G.M."/>
            <person name="Zhang X.-X."/>
            <person name="Moon C.D."/>
            <person name="Gehrig S.M."/>
            <person name="Godfrey S.A.C."/>
            <person name="Knight C.G."/>
            <person name="Malone J.G."/>
            <person name="Robinson Z."/>
            <person name="Spiers A.J."/>
            <person name="Harris S."/>
            <person name="Challis G.L."/>
            <person name="Yaxley A.M."/>
            <person name="Harris D."/>
            <person name="Seeger K."/>
            <person name="Murphy L."/>
            <person name="Rutter S."/>
            <person name="Squares R."/>
            <person name="Quail M.A."/>
            <person name="Saunders E."/>
            <person name="Mavromatis K."/>
            <person name="Brettin T.S."/>
            <person name="Bentley S.D."/>
            <person name="Hothersall J."/>
            <person name="Stephens E."/>
            <person name="Thomas C.M."/>
            <person name="Parkhill J."/>
            <person name="Levy S.B."/>
            <person name="Rainey P.B."/>
            <person name="Thomson N.R."/>
        </authorList>
    </citation>
    <scope>NUCLEOTIDE SEQUENCE [LARGE SCALE GENOMIC DNA]</scope>
    <source>
        <strain>Pf0-1</strain>
    </source>
</reference>
<name>MDCG_PSEPF</name>
<comment type="function">
    <text evidence="1">Transfers 2'-(5-triphosphoribosyl)-3'-dephosphocoenzyme-A to the apo-[acyl-carrier-protein] of the malonate decarboxylase to yield holo-[acyl-carrier-protein].</text>
</comment>
<comment type="catalytic activity">
    <reaction evidence="1">
        <text>apo-[malonate decarboxylase ACP] + 2'-(5''-triphospho-alpha-D-ribosyl)-3'-dephospho-CoA = holo-[malonate decarboxylase ACP] + diphosphate</text>
        <dbReference type="Rhea" id="RHEA:42644"/>
        <dbReference type="Rhea" id="RHEA-COMP:10160"/>
        <dbReference type="Rhea" id="RHEA-COMP:10161"/>
        <dbReference type="ChEBI" id="CHEBI:29999"/>
        <dbReference type="ChEBI" id="CHEBI:33019"/>
        <dbReference type="ChEBI" id="CHEBI:61378"/>
        <dbReference type="ChEBI" id="CHEBI:82683"/>
        <dbReference type="EC" id="2.7.7.66"/>
    </reaction>
</comment>
<comment type="similarity">
    <text evidence="1">Belongs to the MdcG family.</text>
</comment>
<gene>
    <name evidence="1" type="primary">mdcG</name>
    <name type="ordered locus">Pfl01_5297</name>
</gene>
<feature type="chain" id="PRO_1000061473" description="Phosphoribosyl-dephospho-CoA transferase">
    <location>
        <begin position="1"/>
        <end position="206"/>
    </location>
</feature>
<feature type="active site" evidence="1">
    <location>
        <position position="131"/>
    </location>
</feature>
<feature type="active site" evidence="1">
    <location>
        <position position="133"/>
    </location>
</feature>
<protein>
    <recommendedName>
        <fullName evidence="1">Phosphoribosyl-dephospho-CoA transferase</fullName>
        <ecNumber evidence="1">2.7.7.66</ecNumber>
    </recommendedName>
    <alternativeName>
        <fullName evidence="1">Malonate decarboxylase holo-[acyl-carrier-protein] synthase</fullName>
        <shortName evidence="1">Holo-ACP synthase</shortName>
    </alternativeName>
</protein>
<evidence type="ECO:0000255" key="1">
    <source>
        <dbReference type="HAMAP-Rule" id="MF_00650"/>
    </source>
</evidence>
<accession>Q3K5C0</accession>